<feature type="initiator methionine" description="Removed" evidence="12">
    <location>
        <position position="1"/>
    </location>
</feature>
<feature type="chain" id="PRO_0000210119" description="mRNA-capping enzyme subunit beta">
    <location>
        <begin position="2"/>
        <end position="549"/>
    </location>
</feature>
<feature type="region of interest" description="Disordered" evidence="1">
    <location>
        <begin position="30"/>
        <end position="169"/>
    </location>
</feature>
<feature type="compositionally biased region" description="Acidic residues" evidence="1">
    <location>
        <begin position="86"/>
        <end position="96"/>
    </location>
</feature>
<feature type="compositionally biased region" description="Basic and acidic residues" evidence="1">
    <location>
        <begin position="135"/>
        <end position="157"/>
    </location>
</feature>
<feature type="active site" description="N6-GMP-lysine intermediate">
    <location>
        <position position="223"/>
    </location>
</feature>
<feature type="site" description="Essential for dimer formation">
    <location>
        <position position="280"/>
    </location>
</feature>
<feature type="modified residue" description="N-acetylserine" evidence="12">
    <location>
        <position position="2"/>
    </location>
</feature>
<feature type="modified residue" description="Phosphoserine" evidence="8 9 10 11">
    <location>
        <position position="15"/>
    </location>
</feature>
<feature type="modified residue" description="Phosphoserine" evidence="10 11">
    <location>
        <position position="124"/>
    </location>
</feature>
<feature type="mutagenesis site" description="Significant growth defects." evidence="2">
    <original>D</original>
    <variation>A</variation>
    <location>
        <position position="280"/>
    </location>
</feature>
<feature type="mutagenesis site" description="No growth." evidence="2">
    <original>I</original>
    <variation>A</variation>
    <location>
        <position position="520"/>
    </location>
</feature>
<feature type="mutagenesis site" description="Temperature sensitive growth phenotype." evidence="2">
    <original>F</original>
    <variation>A</variation>
    <location>
        <position position="523"/>
    </location>
</feature>
<feature type="mutagenesis site" description="Temperature sensitive growth phenotype." evidence="2">
    <original>L</original>
    <variation>A</variation>
    <location>
        <position position="524"/>
    </location>
</feature>
<feature type="sequence conflict" description="In Ref. 1; BAA23522." evidence="7" ref="1">
    <original>R</original>
    <variation>K</variation>
    <location>
        <position position="242"/>
    </location>
</feature>
<feature type="helix" evidence="13">
    <location>
        <begin position="246"/>
        <end position="248"/>
    </location>
</feature>
<feature type="turn" evidence="15">
    <location>
        <begin position="254"/>
        <end position="258"/>
    </location>
</feature>
<feature type="strand" evidence="13">
    <location>
        <begin position="262"/>
        <end position="264"/>
    </location>
</feature>
<feature type="strand" evidence="13">
    <location>
        <begin position="274"/>
        <end position="276"/>
    </location>
</feature>
<feature type="helix" evidence="13">
    <location>
        <begin position="280"/>
        <end position="294"/>
    </location>
</feature>
<feature type="turn" evidence="13">
    <location>
        <begin position="298"/>
        <end position="300"/>
    </location>
</feature>
<feature type="helix" evidence="13">
    <location>
        <begin position="301"/>
        <end position="303"/>
    </location>
</feature>
<feature type="strand" evidence="13">
    <location>
        <begin position="304"/>
        <end position="314"/>
    </location>
</feature>
<feature type="strand" evidence="13">
    <location>
        <begin position="319"/>
        <end position="321"/>
    </location>
</feature>
<feature type="strand" evidence="13">
    <location>
        <begin position="330"/>
        <end position="332"/>
    </location>
</feature>
<feature type="strand" evidence="13">
    <location>
        <begin position="338"/>
        <end position="341"/>
    </location>
</feature>
<feature type="helix" evidence="13">
    <location>
        <begin position="345"/>
        <end position="359"/>
    </location>
</feature>
<feature type="helix" evidence="13">
    <location>
        <begin position="362"/>
        <end position="364"/>
    </location>
</feature>
<feature type="turn" evidence="13">
    <location>
        <begin position="365"/>
        <end position="367"/>
    </location>
</feature>
<feature type="strand" evidence="13">
    <location>
        <begin position="368"/>
        <end position="381"/>
    </location>
</feature>
<feature type="strand" evidence="13">
    <location>
        <begin position="391"/>
        <end position="400"/>
    </location>
</feature>
<feature type="strand" evidence="13">
    <location>
        <begin position="405"/>
        <end position="418"/>
    </location>
</feature>
<feature type="strand" evidence="13">
    <location>
        <begin position="425"/>
        <end position="435"/>
    </location>
</feature>
<feature type="strand" evidence="15">
    <location>
        <begin position="437"/>
        <end position="440"/>
    </location>
</feature>
<feature type="helix" evidence="13">
    <location>
        <begin position="441"/>
        <end position="445"/>
    </location>
</feature>
<feature type="strand" evidence="14">
    <location>
        <begin position="446"/>
        <end position="448"/>
    </location>
</feature>
<feature type="strand" evidence="13">
    <location>
        <begin position="453"/>
        <end position="463"/>
    </location>
</feature>
<feature type="helix" evidence="13">
    <location>
        <begin position="464"/>
        <end position="466"/>
    </location>
</feature>
<feature type="strand" evidence="13">
    <location>
        <begin position="468"/>
        <end position="477"/>
    </location>
</feature>
<feature type="strand" evidence="13">
    <location>
        <begin position="488"/>
        <end position="497"/>
    </location>
</feature>
<feature type="helix" evidence="13">
    <location>
        <begin position="499"/>
        <end position="507"/>
    </location>
</feature>
<feature type="turn" evidence="13">
    <location>
        <begin position="508"/>
        <end position="511"/>
    </location>
</feature>
<feature type="helix" evidence="13">
    <location>
        <begin position="514"/>
        <end position="536"/>
    </location>
</feature>
<organism>
    <name type="scientific">Saccharomyces cerevisiae (strain ATCC 204508 / S288c)</name>
    <name type="common">Baker's yeast</name>
    <dbReference type="NCBI Taxonomy" id="559292"/>
    <lineage>
        <taxon>Eukaryota</taxon>
        <taxon>Fungi</taxon>
        <taxon>Dikarya</taxon>
        <taxon>Ascomycota</taxon>
        <taxon>Saccharomycotina</taxon>
        <taxon>Saccharomycetes</taxon>
        <taxon>Saccharomycetales</taxon>
        <taxon>Saccharomycetaceae</taxon>
        <taxon>Saccharomyces</taxon>
    </lineage>
</organism>
<dbReference type="EC" id="3.6.1.74" evidence="5"/>
<dbReference type="EMBL" id="AB008799">
    <property type="protein sequence ID" value="BAA23522.1"/>
    <property type="molecule type" value="Genomic_DNA"/>
</dbReference>
<dbReference type="EMBL" id="Z73584">
    <property type="protein sequence ID" value="CAA97944.1"/>
    <property type="molecule type" value="Genomic_DNA"/>
</dbReference>
<dbReference type="EMBL" id="Z73583">
    <property type="protein sequence ID" value="CAA97943.1"/>
    <property type="molecule type" value="Genomic_DNA"/>
</dbReference>
<dbReference type="EMBL" id="X94561">
    <property type="protein sequence ID" value="CAA64259.1"/>
    <property type="molecule type" value="Genomic_DNA"/>
</dbReference>
<dbReference type="EMBL" id="BK006949">
    <property type="protein sequence ID" value="DAA11208.1"/>
    <property type="molecule type" value="Genomic_DNA"/>
</dbReference>
<dbReference type="PIR" id="S61706">
    <property type="entry name" value="S61706"/>
</dbReference>
<dbReference type="RefSeq" id="NP_015096.1">
    <property type="nucleotide sequence ID" value="NM_001184042.1"/>
</dbReference>
<dbReference type="PDB" id="1D8H">
    <property type="method" value="X-ray"/>
    <property type="resolution" value="2.00 A"/>
    <property type="chains" value="A/B/C=241-549"/>
</dbReference>
<dbReference type="PDB" id="1D8I">
    <property type="method" value="X-ray"/>
    <property type="resolution" value="2.05 A"/>
    <property type="chains" value="A/B/C=241-549"/>
</dbReference>
<dbReference type="PDB" id="3KYH">
    <property type="method" value="X-ray"/>
    <property type="resolution" value="3.00 A"/>
    <property type="chains" value="A/B=241-549"/>
</dbReference>
<dbReference type="PDBsum" id="1D8H"/>
<dbReference type="PDBsum" id="1D8I"/>
<dbReference type="PDBsum" id="3KYH"/>
<dbReference type="SMR" id="O13297"/>
<dbReference type="BioGRID" id="35957">
    <property type="interactions" value="522"/>
</dbReference>
<dbReference type="ComplexPortal" id="CPX-580">
    <property type="entry name" value="mRNA capping enzyme complex"/>
</dbReference>
<dbReference type="DIP" id="DIP-2299N"/>
<dbReference type="FunCoup" id="O13297">
    <property type="interactions" value="105"/>
</dbReference>
<dbReference type="IntAct" id="O13297">
    <property type="interactions" value="22"/>
</dbReference>
<dbReference type="MINT" id="O13297"/>
<dbReference type="STRING" id="4932.YPL228W"/>
<dbReference type="iPTMnet" id="O13297"/>
<dbReference type="PaxDb" id="4932-YPL228W"/>
<dbReference type="PeptideAtlas" id="O13297"/>
<dbReference type="EnsemblFungi" id="YPL228W_mRNA">
    <property type="protein sequence ID" value="YPL228W"/>
    <property type="gene ID" value="YPL228W"/>
</dbReference>
<dbReference type="GeneID" id="855873"/>
<dbReference type="KEGG" id="sce:YPL228W"/>
<dbReference type="AGR" id="SGD:S000006149"/>
<dbReference type="SGD" id="S000006149">
    <property type="gene designation" value="CET1"/>
</dbReference>
<dbReference type="VEuPathDB" id="FungiDB:YPL228W"/>
<dbReference type="eggNOG" id="ENOG502RZAX">
    <property type="taxonomic scope" value="Eukaryota"/>
</dbReference>
<dbReference type="HOGENOM" id="CLU_037653_0_0_1"/>
<dbReference type="InParanoid" id="O13297"/>
<dbReference type="OMA" id="DWVYATI"/>
<dbReference type="OrthoDB" id="272147at2759"/>
<dbReference type="BioCyc" id="MetaCyc:G3O-34116-MONOMER"/>
<dbReference type="BioCyc" id="YEAST:G3O-34116-MONOMER"/>
<dbReference type="BRENDA" id="3.6.1.74">
    <property type="organism ID" value="984"/>
</dbReference>
<dbReference type="BioGRID-ORCS" id="855873">
    <property type="hits" value="8 hits in 10 CRISPR screens"/>
</dbReference>
<dbReference type="EvolutionaryTrace" id="O13297"/>
<dbReference type="PRO" id="PR:O13297"/>
<dbReference type="Proteomes" id="UP000002311">
    <property type="component" value="Chromosome XVI"/>
</dbReference>
<dbReference type="RNAct" id="O13297">
    <property type="molecule type" value="protein"/>
</dbReference>
<dbReference type="GO" id="GO:0031533">
    <property type="term" value="C:mRNA capping enzyme complex"/>
    <property type="evidence" value="ECO:0000316"/>
    <property type="project" value="SGD"/>
</dbReference>
<dbReference type="GO" id="GO:0140818">
    <property type="term" value="F:mRNA 5'-triphosphate monophosphatase activity"/>
    <property type="evidence" value="ECO:0007669"/>
    <property type="project" value="RHEA"/>
</dbReference>
<dbReference type="GO" id="GO:0004651">
    <property type="term" value="F:polynucleotide 5'-phosphatase activity"/>
    <property type="evidence" value="ECO:0000314"/>
    <property type="project" value="SGD"/>
</dbReference>
<dbReference type="GO" id="GO:0006370">
    <property type="term" value="P:7-methylguanosine mRNA capping"/>
    <property type="evidence" value="ECO:0000314"/>
    <property type="project" value="ComplexPortal"/>
</dbReference>
<dbReference type="GO" id="GO:1900182">
    <property type="term" value="P:positive regulation of protein localization to nucleus"/>
    <property type="evidence" value="ECO:0000315"/>
    <property type="project" value="SGD"/>
</dbReference>
<dbReference type="GO" id="GO:0032968">
    <property type="term" value="P:positive regulation of transcription elongation by RNA polymerase II"/>
    <property type="evidence" value="ECO:0000315"/>
    <property type="project" value="SGD"/>
</dbReference>
<dbReference type="CDD" id="cd07470">
    <property type="entry name" value="CYTH-like_mRNA_RTPase"/>
    <property type="match status" value="1"/>
</dbReference>
<dbReference type="FunFam" id="3.20.100.10:FF:000001">
    <property type="entry name" value="mRNA-capping enzyme subunit beta"/>
    <property type="match status" value="1"/>
</dbReference>
<dbReference type="Gene3D" id="3.20.100.10">
    <property type="entry name" value="mRNA triphosphatase Cet1-like"/>
    <property type="match status" value="1"/>
</dbReference>
<dbReference type="InterPro" id="IPR040343">
    <property type="entry name" value="Cet1/Ctl1"/>
</dbReference>
<dbReference type="InterPro" id="IPR033469">
    <property type="entry name" value="CYTH-like_dom_sf"/>
</dbReference>
<dbReference type="InterPro" id="IPR004206">
    <property type="entry name" value="mRNA_triPase_Cet1"/>
</dbReference>
<dbReference type="InterPro" id="IPR037009">
    <property type="entry name" value="mRNA_triPase_Cet1_sf"/>
</dbReference>
<dbReference type="PANTHER" id="PTHR28118:SF1">
    <property type="entry name" value="POLYNUCLEOTIDE 5'-TRIPHOSPHATASE CTL1-RELATED"/>
    <property type="match status" value="1"/>
</dbReference>
<dbReference type="PANTHER" id="PTHR28118">
    <property type="entry name" value="POLYNUCLEOTIDE 5'-TRIPHOSPHATASE-RELATED"/>
    <property type="match status" value="1"/>
</dbReference>
<dbReference type="Pfam" id="PF02940">
    <property type="entry name" value="mRNA_triPase"/>
    <property type="match status" value="1"/>
</dbReference>
<dbReference type="SUPFAM" id="SSF55154">
    <property type="entry name" value="CYTH-like phosphatases"/>
    <property type="match status" value="1"/>
</dbReference>
<sequence length="549" mass="61850">MSYTDNPPQTKRALSLDDLVNHDENEKVKLQKLSEAANGSRPFAENLESDINQTETGQAAPIDNYKESTGHGSHSQKPKSRKSSNDDEETDTDDEMGASGEINFDSEMDFDYDKQHRNLLSNGSPPMNDGSDANAKLEKPSDDSIHQNSKSDEEQRIPKQGNEGNIASNYITQVPLQKQKQTEKKIAGNAVGSVVKKEEEANAAVDNIFEEKATLQSKKNNIKRDLEVLNEISASSKPSKYRNVPIWAQKWKPTIKALQSINVKDLKIDPSFLNIIPDDDLTKSVQDWVYATIYSIAPELRSFIELEMKFGVIIDAKGPDRVNPPVSSQCVFTELDAHLTPNIDASLFKELSKYIRGISEVTENTGKFSIIESQTRDSVYRVGLSTQRPRFLRMSTDIKTGRVGQFIEKRHVAQLLLYSPKDSYDVKISLNLELPVPDNDPPEKYKSQSPISERTKDRVSYIHNDSCTRIDITKVENHNQNSKSRQSETTHEVELEINTPALLNAFDNITNDSKEYASLIRTFLNNGTIIRRKLSSLSYEIFEGSKKVM</sequence>
<keyword id="KW-0002">3D-structure</keyword>
<keyword id="KW-0007">Acetylation</keyword>
<keyword id="KW-0378">Hydrolase</keyword>
<keyword id="KW-0506">mRNA capping</keyword>
<keyword id="KW-0507">mRNA processing</keyword>
<keyword id="KW-0539">Nucleus</keyword>
<keyword id="KW-0597">Phosphoprotein</keyword>
<keyword id="KW-1185">Reference proteome</keyword>
<comment type="function">
    <text evidence="2 4 5">First step of mRNA capping. Converts the 5'-triphosphate end of a nascent mRNA chain into a diphosphate end.</text>
</comment>
<comment type="catalytic activity">
    <reaction evidence="5">
        <text>a 5'-end triphospho-ribonucleoside in mRNA + H2O = a 5'-end diphospho-ribonucleoside in mRNA + phosphate + H(+)</text>
        <dbReference type="Rhea" id="RHEA:67004"/>
        <dbReference type="Rhea" id="RHEA-COMP:17164"/>
        <dbReference type="Rhea" id="RHEA-COMP:17165"/>
        <dbReference type="ChEBI" id="CHEBI:15377"/>
        <dbReference type="ChEBI" id="CHEBI:15378"/>
        <dbReference type="ChEBI" id="CHEBI:43474"/>
        <dbReference type="ChEBI" id="CHEBI:167616"/>
        <dbReference type="ChEBI" id="CHEBI:167618"/>
        <dbReference type="EC" id="3.6.1.74"/>
    </reaction>
    <physiologicalReaction direction="left-to-right" evidence="5">
        <dbReference type="Rhea" id="RHEA:67005"/>
    </physiologicalReaction>
</comment>
<comment type="cofactor">
    <cofactor evidence="5">
        <name>Mg(2+)</name>
        <dbReference type="ChEBI" id="CHEBI:18420"/>
    </cofactor>
</comment>
<comment type="biophysicochemical properties">
    <kinetics>
        <KM evidence="5">1.4 uM for pppA-poly(A)</KM>
    </kinetics>
    <phDependence>
        <text evidence="5">Optimum pH is 6.5-8.5.</text>
    </phDependence>
</comment>
<comment type="subunit">
    <text evidence="2 4 6">Heterodimer (PubMed:3029058, PubMed:6389537). The mRNA-capping enzyme is composed of two separate chains alpha and beta, respectively a mRNA guanylyltransferase and an mRNA 5'-triphosphate monophosphatase (PubMed:12788946, PubMed:3029058, PubMed:6389537).</text>
</comment>
<comment type="interaction">
    <interactant intactId="EBI-4473">
        <id>O13297</id>
    </interactant>
    <interactant intactId="EBI-10503">
        <id>Q01159</id>
        <label>CEG1</label>
    </interactant>
    <organismsDiffer>false</organismsDiffer>
    <experiments>10</experiments>
</comment>
<comment type="subcellular location">
    <subcellularLocation>
        <location>Nucleus</location>
    </subcellularLocation>
</comment>
<comment type="miscellaneous">
    <text evidence="3">Present with 3900 molecules/cell in log phase SD medium.</text>
</comment>
<comment type="similarity">
    <text evidence="7">Belongs to the fungal TPase family.</text>
</comment>
<proteinExistence type="evidence at protein level"/>
<evidence type="ECO:0000256" key="1">
    <source>
        <dbReference type="SAM" id="MobiDB-lite"/>
    </source>
</evidence>
<evidence type="ECO:0000269" key="2">
    <source>
    </source>
</evidence>
<evidence type="ECO:0000269" key="3">
    <source>
    </source>
</evidence>
<evidence type="ECO:0000269" key="4">
    <source>
    </source>
</evidence>
<evidence type="ECO:0000269" key="5">
    <source>
    </source>
</evidence>
<evidence type="ECO:0000269" key="6">
    <source>
    </source>
</evidence>
<evidence type="ECO:0000305" key="7"/>
<evidence type="ECO:0007744" key="8">
    <source>
    </source>
</evidence>
<evidence type="ECO:0007744" key="9">
    <source>
    </source>
</evidence>
<evidence type="ECO:0007744" key="10">
    <source>
    </source>
</evidence>
<evidence type="ECO:0007744" key="11">
    <source>
    </source>
</evidence>
<evidence type="ECO:0007744" key="12">
    <source>
    </source>
</evidence>
<evidence type="ECO:0007829" key="13">
    <source>
        <dbReference type="PDB" id="1D8H"/>
    </source>
</evidence>
<evidence type="ECO:0007829" key="14">
    <source>
        <dbReference type="PDB" id="1D8I"/>
    </source>
</evidence>
<evidence type="ECO:0007829" key="15">
    <source>
        <dbReference type="PDB" id="3KYH"/>
    </source>
</evidence>
<protein>
    <recommendedName>
        <fullName>mRNA-capping enzyme subunit beta</fullName>
        <ecNumber evidence="5">3.6.1.74</ecNumber>
    </recommendedName>
    <alternativeName>
        <fullName>mRNA 5'-phosphatase</fullName>
    </alternativeName>
    <alternativeName>
        <fullName>mRNA 5'-triphosphate monophosphatase</fullName>
    </alternativeName>
</protein>
<reference key="1">
    <citation type="journal article" date="1997" name="Biochem. Biophys. Res. Commun.">
        <title>Isolation and characterization of the yeast mRNA capping enzyme beta subunit gene encoding RNA 5'-triphosphatase, which is essential for cell viability.</title>
        <authorList>
            <person name="Tsukamoto T."/>
            <person name="Shibagaki Y."/>
            <person name="Imajoh-Ohmi S."/>
            <person name="Murakoshi T."/>
            <person name="Suzuki M."/>
            <person name="Nakamura A."/>
            <person name="Gotoh H."/>
            <person name="Mizumoto K."/>
        </authorList>
    </citation>
    <scope>NUCLEOTIDE SEQUENCE [GENOMIC DNA]</scope>
    <source>
        <strain>ATCC 26109 / X2180</strain>
    </source>
</reference>
<reference key="2">
    <citation type="journal article" date="1997" name="Nature">
        <title>The nucleotide sequence of Saccharomyces cerevisiae chromosome XVI.</title>
        <authorList>
            <person name="Bussey H."/>
            <person name="Storms R.K."/>
            <person name="Ahmed A."/>
            <person name="Albermann K."/>
            <person name="Allen E."/>
            <person name="Ansorge W."/>
            <person name="Araujo R."/>
            <person name="Aparicio A."/>
            <person name="Barrell B.G."/>
            <person name="Badcock K."/>
            <person name="Benes V."/>
            <person name="Botstein D."/>
            <person name="Bowman S."/>
            <person name="Brueckner M."/>
            <person name="Carpenter J."/>
            <person name="Cherry J.M."/>
            <person name="Chung E."/>
            <person name="Churcher C.M."/>
            <person name="Coster F."/>
            <person name="Davis K."/>
            <person name="Davis R.W."/>
            <person name="Dietrich F.S."/>
            <person name="Delius H."/>
            <person name="DiPaolo T."/>
            <person name="Dubois E."/>
            <person name="Duesterhoeft A."/>
            <person name="Duncan M."/>
            <person name="Floeth M."/>
            <person name="Fortin N."/>
            <person name="Friesen J.D."/>
            <person name="Fritz C."/>
            <person name="Goffeau A."/>
            <person name="Hall J."/>
            <person name="Hebling U."/>
            <person name="Heumann K."/>
            <person name="Hilbert H."/>
            <person name="Hillier L.W."/>
            <person name="Hunicke-Smith S."/>
            <person name="Hyman R.W."/>
            <person name="Johnston M."/>
            <person name="Kalman S."/>
            <person name="Kleine K."/>
            <person name="Komp C."/>
            <person name="Kurdi O."/>
            <person name="Lashkari D."/>
            <person name="Lew H."/>
            <person name="Lin A."/>
            <person name="Lin D."/>
            <person name="Louis E.J."/>
            <person name="Marathe R."/>
            <person name="Messenguy F."/>
            <person name="Mewes H.-W."/>
            <person name="Mirtipati S."/>
            <person name="Moestl D."/>
            <person name="Mueller-Auer S."/>
            <person name="Namath A."/>
            <person name="Nentwich U."/>
            <person name="Oefner P."/>
            <person name="Pearson D."/>
            <person name="Petel F.X."/>
            <person name="Pohl T.M."/>
            <person name="Purnelle B."/>
            <person name="Rajandream M.A."/>
            <person name="Rechmann S."/>
            <person name="Rieger M."/>
            <person name="Riles L."/>
            <person name="Roberts D."/>
            <person name="Schaefer M."/>
            <person name="Scharfe M."/>
            <person name="Scherens B."/>
            <person name="Schramm S."/>
            <person name="Schroeder M."/>
            <person name="Sdicu A.-M."/>
            <person name="Tettelin H."/>
            <person name="Urrestarazu L.A."/>
            <person name="Ushinsky S."/>
            <person name="Vierendeels F."/>
            <person name="Vissers S."/>
            <person name="Voss H."/>
            <person name="Walsh S.V."/>
            <person name="Wambutt R."/>
            <person name="Wang Y."/>
            <person name="Wedler E."/>
            <person name="Wedler H."/>
            <person name="Winnett E."/>
            <person name="Zhong W.-W."/>
            <person name="Zollner A."/>
            <person name="Vo D.H."/>
            <person name="Hani J."/>
        </authorList>
    </citation>
    <scope>NUCLEOTIDE SEQUENCE [LARGE SCALE GENOMIC DNA]</scope>
    <source>
        <strain>ATCC 204508 / S288c</strain>
    </source>
</reference>
<reference key="3">
    <citation type="journal article" date="2014" name="G3 (Bethesda)">
        <title>The reference genome sequence of Saccharomyces cerevisiae: Then and now.</title>
        <authorList>
            <person name="Engel S.R."/>
            <person name="Dietrich F.S."/>
            <person name="Fisk D.G."/>
            <person name="Binkley G."/>
            <person name="Balakrishnan R."/>
            <person name="Costanzo M.C."/>
            <person name="Dwight S.S."/>
            <person name="Hitz B.C."/>
            <person name="Karra K."/>
            <person name="Nash R.S."/>
            <person name="Weng S."/>
            <person name="Wong E.D."/>
            <person name="Lloyd P."/>
            <person name="Skrzypek M.S."/>
            <person name="Miyasato S.R."/>
            <person name="Simison M."/>
            <person name="Cherry J.M."/>
        </authorList>
    </citation>
    <scope>GENOME REANNOTATION</scope>
    <source>
        <strain>ATCC 204508 / S288c</strain>
    </source>
</reference>
<reference key="4">
    <citation type="journal article" date="1984" name="J. Biol. Chem.">
        <title>Messenger RNA guanylyltransferase from Saccharomyces cerevisiae. I. Purification and subunit structure.</title>
        <authorList>
            <person name="Itoh N."/>
            <person name="Mizumoto K."/>
            <person name="Kaziro Y."/>
        </authorList>
    </citation>
    <scope>SUBUNIT</scope>
</reference>
<reference key="5">
    <citation type="journal article" date="1984" name="J. Biol. Chem.">
        <title>Messenger RNA guanylyltransferase from Saccharomyces cerevisiae. II. Catalytic properties.</title>
        <authorList>
            <person name="Itoh N."/>
            <person name="Mizumoto K."/>
            <person name="Kaziro Y."/>
        </authorList>
    </citation>
    <scope>FUNCTION</scope>
    <scope>CATALYTIC ACTIVITY</scope>
    <scope>COFACTOR</scope>
    <scope>BIOPHYSICOCHEMICAL PROPERTIES</scope>
</reference>
<reference key="6">
    <citation type="journal article" date="1987" name="J. Biol. Chem.">
        <title>Messenger RNA guanylyltransferase from Saccharomyces cerevisiae. Large scale purification, subunit functions, and subcellular localization.</title>
        <authorList>
            <person name="Itoh N."/>
            <person name="Yamada H."/>
            <person name="Kaziro Y."/>
            <person name="Mizumoto K."/>
        </authorList>
    </citation>
    <scope>FUNCTION</scope>
    <scope>SUBUNIT</scope>
</reference>
<reference key="7">
    <citation type="journal article" date="2003" name="J. Biol. Chem.">
        <title>Homodimeric quaternary structure is required for the in vivo function and thermal stability of Saccharomyces cerevisiae and Schizosaccharomyces pombe RNA triphosphatases.</title>
        <authorList>
            <person name="Hausmann S."/>
            <person name="Pei Y."/>
            <person name="Shuman S."/>
        </authorList>
    </citation>
    <scope>FUNCTION</scope>
    <scope>SUBUNIT</scope>
    <scope>MUTAGENESIS OF ASP-280; ILE-520; PHE-523 AND LEU-524</scope>
</reference>
<reference key="8">
    <citation type="journal article" date="2003" name="Nature">
        <title>Global analysis of protein expression in yeast.</title>
        <authorList>
            <person name="Ghaemmaghami S."/>
            <person name="Huh W.-K."/>
            <person name="Bower K."/>
            <person name="Howson R.W."/>
            <person name="Belle A."/>
            <person name="Dephoure N."/>
            <person name="O'Shea E.K."/>
            <person name="Weissman J.S."/>
        </authorList>
    </citation>
    <scope>LEVEL OF PROTEIN EXPRESSION [LARGE SCALE ANALYSIS]</scope>
</reference>
<reference key="9">
    <citation type="journal article" date="2007" name="J. Proteome Res.">
        <title>Large-scale phosphorylation analysis of alpha-factor-arrested Saccharomyces cerevisiae.</title>
        <authorList>
            <person name="Li X."/>
            <person name="Gerber S.A."/>
            <person name="Rudner A.D."/>
            <person name="Beausoleil S.A."/>
            <person name="Haas W."/>
            <person name="Villen J."/>
            <person name="Elias J.E."/>
            <person name="Gygi S.P."/>
        </authorList>
    </citation>
    <scope>PHOSPHORYLATION [LARGE SCALE ANALYSIS] AT SER-15</scope>
    <scope>IDENTIFICATION BY MASS SPECTROMETRY [LARGE SCALE ANALYSIS]</scope>
    <source>
        <strain>ADR376</strain>
    </source>
</reference>
<reference key="10">
    <citation type="journal article" date="2007" name="Proc. Natl. Acad. Sci. U.S.A.">
        <title>Analysis of phosphorylation sites on proteins from Saccharomyces cerevisiae by electron transfer dissociation (ETD) mass spectrometry.</title>
        <authorList>
            <person name="Chi A."/>
            <person name="Huttenhower C."/>
            <person name="Geer L.Y."/>
            <person name="Coon J.J."/>
            <person name="Syka J.E.P."/>
            <person name="Bai D.L."/>
            <person name="Shabanowitz J."/>
            <person name="Burke D.J."/>
            <person name="Troyanskaya O.G."/>
            <person name="Hunt D.F."/>
        </authorList>
    </citation>
    <scope>PHOSPHORYLATION [LARGE SCALE ANALYSIS] AT SER-15</scope>
    <scope>IDENTIFICATION BY MASS SPECTROMETRY [LARGE SCALE ANALYSIS]</scope>
</reference>
<reference key="11">
    <citation type="journal article" date="2008" name="Mol. Cell. Proteomics">
        <title>A multidimensional chromatography technology for in-depth phosphoproteome analysis.</title>
        <authorList>
            <person name="Albuquerque C.P."/>
            <person name="Smolka M.B."/>
            <person name="Payne S.H."/>
            <person name="Bafna V."/>
            <person name="Eng J."/>
            <person name="Zhou H."/>
        </authorList>
    </citation>
    <scope>PHOSPHORYLATION [LARGE SCALE ANALYSIS] AT SER-15 AND SER-124</scope>
    <scope>IDENTIFICATION BY MASS SPECTROMETRY [LARGE SCALE ANALYSIS]</scope>
</reference>
<reference key="12">
    <citation type="journal article" date="2009" name="Science">
        <title>Global analysis of Cdk1 substrate phosphorylation sites provides insights into evolution.</title>
        <authorList>
            <person name="Holt L.J."/>
            <person name="Tuch B.B."/>
            <person name="Villen J."/>
            <person name="Johnson A.D."/>
            <person name="Gygi S.P."/>
            <person name="Morgan D.O."/>
        </authorList>
    </citation>
    <scope>PHOSPHORYLATION [LARGE SCALE ANALYSIS] AT SER-15 AND SER-124</scope>
    <scope>IDENTIFICATION BY MASS SPECTROMETRY [LARGE SCALE ANALYSIS]</scope>
</reference>
<reference key="13">
    <citation type="journal article" date="2012" name="Proc. Natl. Acad. Sci. U.S.A.">
        <title>N-terminal acetylome analyses and functional insights of the N-terminal acetyltransferase NatB.</title>
        <authorList>
            <person name="Van Damme P."/>
            <person name="Lasa M."/>
            <person name="Polevoda B."/>
            <person name="Gazquez C."/>
            <person name="Elosegui-Artola A."/>
            <person name="Kim D.S."/>
            <person name="De Juan-Pardo E."/>
            <person name="Demeyer K."/>
            <person name="Hole K."/>
            <person name="Larrea E."/>
            <person name="Timmerman E."/>
            <person name="Prieto J."/>
            <person name="Arnesen T."/>
            <person name="Sherman F."/>
            <person name="Gevaert K."/>
            <person name="Aldabe R."/>
        </authorList>
    </citation>
    <scope>ACETYLATION [LARGE SCALE ANALYSIS] AT SER-2</scope>
    <scope>CLEAVAGE OF INITIATOR METHIONINE [LARGE SCALE ANALYSIS]</scope>
    <scope>IDENTIFICATION BY MASS SPECTROMETRY [LARGE SCALE ANALYSIS]</scope>
</reference>
<reference key="14">
    <citation type="journal article" date="1999" name="Cell">
        <title>Structure and mechanism of yeast RNA triphosphatase: an essential component of the mRNA capping apparatus.</title>
        <authorList>
            <person name="Lima C.D."/>
            <person name="Wang L.K."/>
            <person name="Shuman S."/>
        </authorList>
    </citation>
    <scope>X-RAY CRYSTALLOGRAPHY (2.0 ANGSTROMS) OF 241-549</scope>
</reference>
<gene>
    <name type="primary">CET1</name>
    <name type="ordered locus">YPL228W</name>
    <name type="ORF">P1433</name>
</gene>
<name>CET1_YEAST</name>
<accession>O13297</accession>
<accession>D6W3E2</accession>
<accession>Q12197</accession>